<proteinExistence type="inferred from homology"/>
<sequence>MRKAKPKKRQILPDPVFGDVKVTRFVNHLMYDGKKNTAFEIFYSALETVKGKLPNEEKSALEIWKAALDNITPQVEVKSRRVGGATFQVPTEIRPDRKESISMKNLIIFARKRGGKTMADKLSAEIVDAFNNQGGAFKRKEDMHRMAEANRAFAHFRF</sequence>
<keyword id="KW-1185">Reference proteome</keyword>
<keyword id="KW-0687">Ribonucleoprotein</keyword>
<keyword id="KW-0689">Ribosomal protein</keyword>
<keyword id="KW-0694">RNA-binding</keyword>
<keyword id="KW-0699">rRNA-binding</keyword>
<keyword id="KW-0820">tRNA-binding</keyword>
<reference key="1">
    <citation type="journal article" date="2007" name="PLoS Biol.">
        <title>Evolution of symbiotic bacteria in the distal human intestine.</title>
        <authorList>
            <person name="Xu J."/>
            <person name="Mahowald M.A."/>
            <person name="Ley R.E."/>
            <person name="Lozupone C.A."/>
            <person name="Hamady M."/>
            <person name="Martens E.C."/>
            <person name="Henrissat B."/>
            <person name="Coutinho P.M."/>
            <person name="Minx P."/>
            <person name="Latreille P."/>
            <person name="Cordum H."/>
            <person name="Van Brunt A."/>
            <person name="Kim K."/>
            <person name="Fulton R.S."/>
            <person name="Fulton L.A."/>
            <person name="Clifton S.W."/>
            <person name="Wilson R.K."/>
            <person name="Knight R.D."/>
            <person name="Gordon J.I."/>
        </authorList>
    </citation>
    <scope>NUCLEOTIDE SEQUENCE [LARGE SCALE GENOMIC DNA]</scope>
    <source>
        <strain>ATCC 8503 / DSM 20701 / CIP 104284 / JCM 5825 / NCTC 11152</strain>
    </source>
</reference>
<organism>
    <name type="scientific">Parabacteroides distasonis (strain ATCC 8503 / DSM 20701 / CIP 104284 / JCM 5825 / NCTC 11152)</name>
    <dbReference type="NCBI Taxonomy" id="435591"/>
    <lineage>
        <taxon>Bacteria</taxon>
        <taxon>Pseudomonadati</taxon>
        <taxon>Bacteroidota</taxon>
        <taxon>Bacteroidia</taxon>
        <taxon>Bacteroidales</taxon>
        <taxon>Tannerellaceae</taxon>
        <taxon>Parabacteroides</taxon>
    </lineage>
</organism>
<dbReference type="EMBL" id="CP000140">
    <property type="protein sequence ID" value="ABR44108.1"/>
    <property type="molecule type" value="Genomic_DNA"/>
</dbReference>
<dbReference type="RefSeq" id="WP_005853957.1">
    <property type="nucleotide sequence ID" value="NZ_LR215978.1"/>
</dbReference>
<dbReference type="SMR" id="A6LEJ4"/>
<dbReference type="STRING" id="435591.BDI_2383"/>
<dbReference type="PaxDb" id="435591-BDI_2383"/>
<dbReference type="GeneID" id="93522376"/>
<dbReference type="KEGG" id="pdi:BDI_2383"/>
<dbReference type="eggNOG" id="COG0049">
    <property type="taxonomic scope" value="Bacteria"/>
</dbReference>
<dbReference type="HOGENOM" id="CLU_072226_1_1_10"/>
<dbReference type="BioCyc" id="PDIS435591:G1G5A-2448-MONOMER"/>
<dbReference type="Proteomes" id="UP000000566">
    <property type="component" value="Chromosome"/>
</dbReference>
<dbReference type="GO" id="GO:0015935">
    <property type="term" value="C:small ribosomal subunit"/>
    <property type="evidence" value="ECO:0007669"/>
    <property type="project" value="InterPro"/>
</dbReference>
<dbReference type="GO" id="GO:0019843">
    <property type="term" value="F:rRNA binding"/>
    <property type="evidence" value="ECO:0007669"/>
    <property type="project" value="UniProtKB-UniRule"/>
</dbReference>
<dbReference type="GO" id="GO:0003735">
    <property type="term" value="F:structural constituent of ribosome"/>
    <property type="evidence" value="ECO:0007669"/>
    <property type="project" value="InterPro"/>
</dbReference>
<dbReference type="GO" id="GO:0000049">
    <property type="term" value="F:tRNA binding"/>
    <property type="evidence" value="ECO:0007669"/>
    <property type="project" value="UniProtKB-UniRule"/>
</dbReference>
<dbReference type="GO" id="GO:0006412">
    <property type="term" value="P:translation"/>
    <property type="evidence" value="ECO:0007669"/>
    <property type="project" value="UniProtKB-UniRule"/>
</dbReference>
<dbReference type="CDD" id="cd14869">
    <property type="entry name" value="uS7_Bacteria"/>
    <property type="match status" value="1"/>
</dbReference>
<dbReference type="FunFam" id="1.10.455.10:FF:000001">
    <property type="entry name" value="30S ribosomal protein S7"/>
    <property type="match status" value="1"/>
</dbReference>
<dbReference type="Gene3D" id="1.10.455.10">
    <property type="entry name" value="Ribosomal protein S7 domain"/>
    <property type="match status" value="1"/>
</dbReference>
<dbReference type="HAMAP" id="MF_00480_B">
    <property type="entry name" value="Ribosomal_uS7_B"/>
    <property type="match status" value="1"/>
</dbReference>
<dbReference type="InterPro" id="IPR000235">
    <property type="entry name" value="Ribosomal_uS7"/>
</dbReference>
<dbReference type="InterPro" id="IPR005717">
    <property type="entry name" value="Ribosomal_uS7_bac/org-type"/>
</dbReference>
<dbReference type="InterPro" id="IPR023798">
    <property type="entry name" value="Ribosomal_uS7_dom"/>
</dbReference>
<dbReference type="InterPro" id="IPR036823">
    <property type="entry name" value="Ribosomal_uS7_dom_sf"/>
</dbReference>
<dbReference type="NCBIfam" id="TIGR01029">
    <property type="entry name" value="rpsG_bact"/>
    <property type="match status" value="1"/>
</dbReference>
<dbReference type="PANTHER" id="PTHR11205">
    <property type="entry name" value="RIBOSOMAL PROTEIN S7"/>
    <property type="match status" value="1"/>
</dbReference>
<dbReference type="Pfam" id="PF00177">
    <property type="entry name" value="Ribosomal_S7"/>
    <property type="match status" value="1"/>
</dbReference>
<dbReference type="PIRSF" id="PIRSF002122">
    <property type="entry name" value="RPS7p_RPS7a_RPS5e_RPS7o"/>
    <property type="match status" value="1"/>
</dbReference>
<dbReference type="SUPFAM" id="SSF47973">
    <property type="entry name" value="Ribosomal protein S7"/>
    <property type="match status" value="1"/>
</dbReference>
<gene>
    <name evidence="1" type="primary">rpsG</name>
    <name type="ordered locus">BDI_2383</name>
</gene>
<comment type="function">
    <text evidence="1">One of the primary rRNA binding proteins, it binds directly to 16S rRNA where it nucleates assembly of the head domain of the 30S subunit. Is located at the subunit interface close to the decoding center, probably blocks exit of the E-site tRNA.</text>
</comment>
<comment type="subunit">
    <text evidence="1">Part of the 30S ribosomal subunit. Contacts proteins S9 and S11.</text>
</comment>
<comment type="similarity">
    <text evidence="1">Belongs to the universal ribosomal protein uS7 family.</text>
</comment>
<name>RS7_PARD8</name>
<evidence type="ECO:0000255" key="1">
    <source>
        <dbReference type="HAMAP-Rule" id="MF_00480"/>
    </source>
</evidence>
<evidence type="ECO:0000305" key="2"/>
<accession>A6LEJ4</accession>
<protein>
    <recommendedName>
        <fullName evidence="1">Small ribosomal subunit protein uS7</fullName>
    </recommendedName>
    <alternativeName>
        <fullName evidence="2">30S ribosomal protein S7</fullName>
    </alternativeName>
</protein>
<feature type="chain" id="PRO_0000344300" description="Small ribosomal subunit protein uS7">
    <location>
        <begin position="1"/>
        <end position="158"/>
    </location>
</feature>